<sequence length="206" mass="23159">MSKGSSTKKWLHEHTSDYYVIQANKLGYRSRASFKILEIQDKYQLFKPNMFVVDLGAAPGGWSEQVIKYIGKNGKLIALDLLEMAPIAGVEFIQGDFSSDETYQKLNTLVNNQKIDCVISDMAPNLSGNKTSDQAKSIYLLELALDFANTNLNKNGSFVAKVFQGQGSDEYLKLVRESFNKVIQFKPKSSRAKSREFYVIATEFKG</sequence>
<name>RLME_FRATT</name>
<protein>
    <recommendedName>
        <fullName evidence="1">Ribosomal RNA large subunit methyltransferase E</fullName>
        <ecNumber evidence="1">2.1.1.166</ecNumber>
    </recommendedName>
    <alternativeName>
        <fullName evidence="1">23S rRNA Um2552 methyltransferase</fullName>
    </alternativeName>
    <alternativeName>
        <fullName evidence="1">rRNA (uridine-2'-O-)-methyltransferase</fullName>
    </alternativeName>
</protein>
<evidence type="ECO:0000255" key="1">
    <source>
        <dbReference type="HAMAP-Rule" id="MF_01547"/>
    </source>
</evidence>
<keyword id="KW-0963">Cytoplasm</keyword>
<keyword id="KW-0489">Methyltransferase</keyword>
<keyword id="KW-1185">Reference proteome</keyword>
<keyword id="KW-0698">rRNA processing</keyword>
<keyword id="KW-0949">S-adenosyl-L-methionine</keyword>
<keyword id="KW-0808">Transferase</keyword>
<organism>
    <name type="scientific">Francisella tularensis subsp. tularensis (strain SCHU S4 / Schu 4)</name>
    <dbReference type="NCBI Taxonomy" id="177416"/>
    <lineage>
        <taxon>Bacteria</taxon>
        <taxon>Pseudomonadati</taxon>
        <taxon>Pseudomonadota</taxon>
        <taxon>Gammaproteobacteria</taxon>
        <taxon>Thiotrichales</taxon>
        <taxon>Francisellaceae</taxon>
        <taxon>Francisella</taxon>
    </lineage>
</organism>
<comment type="function">
    <text evidence="1">Specifically methylates the uridine in position 2552 of 23S rRNA at the 2'-O position of the ribose in the fully assembled 50S ribosomal subunit.</text>
</comment>
<comment type="catalytic activity">
    <reaction evidence="1">
        <text>uridine(2552) in 23S rRNA + S-adenosyl-L-methionine = 2'-O-methyluridine(2552) in 23S rRNA + S-adenosyl-L-homocysteine + H(+)</text>
        <dbReference type="Rhea" id="RHEA:42720"/>
        <dbReference type="Rhea" id="RHEA-COMP:10202"/>
        <dbReference type="Rhea" id="RHEA-COMP:10203"/>
        <dbReference type="ChEBI" id="CHEBI:15378"/>
        <dbReference type="ChEBI" id="CHEBI:57856"/>
        <dbReference type="ChEBI" id="CHEBI:59789"/>
        <dbReference type="ChEBI" id="CHEBI:65315"/>
        <dbReference type="ChEBI" id="CHEBI:74478"/>
        <dbReference type="EC" id="2.1.1.166"/>
    </reaction>
</comment>
<comment type="subcellular location">
    <subcellularLocation>
        <location evidence="1">Cytoplasm</location>
    </subcellularLocation>
</comment>
<comment type="similarity">
    <text evidence="1">Belongs to the class I-like SAM-binding methyltransferase superfamily. RNA methyltransferase RlmE family.</text>
</comment>
<reference key="1">
    <citation type="journal article" date="2005" name="Nat. Genet.">
        <title>The complete genome sequence of Francisella tularensis, the causative agent of tularemia.</title>
        <authorList>
            <person name="Larsson P."/>
            <person name="Oyston P.C.F."/>
            <person name="Chain P."/>
            <person name="Chu M.C."/>
            <person name="Duffield M."/>
            <person name="Fuxelius H.-H."/>
            <person name="Garcia E."/>
            <person name="Haelltorp G."/>
            <person name="Johansson D."/>
            <person name="Isherwood K.E."/>
            <person name="Karp P.D."/>
            <person name="Larsson E."/>
            <person name="Liu Y."/>
            <person name="Michell S."/>
            <person name="Prior J."/>
            <person name="Prior R."/>
            <person name="Malfatti S."/>
            <person name="Sjoestedt A."/>
            <person name="Svensson K."/>
            <person name="Thompson N."/>
            <person name="Vergez L."/>
            <person name="Wagg J.K."/>
            <person name="Wren B.W."/>
            <person name="Lindler L.E."/>
            <person name="Andersson S.G.E."/>
            <person name="Forsman M."/>
            <person name="Titball R.W."/>
        </authorList>
    </citation>
    <scope>NUCLEOTIDE SEQUENCE [LARGE SCALE GENOMIC DNA]</scope>
    <source>
        <strain>SCHU S4 / Schu 4</strain>
    </source>
</reference>
<gene>
    <name evidence="1" type="primary">rlmE</name>
    <name evidence="1" type="synonym">ftsJ</name>
    <name evidence="1" type="synonym">rrmJ</name>
    <name type="ordered locus">FTT_0912c</name>
</gene>
<accession>Q5NGD3</accession>
<dbReference type="EC" id="2.1.1.166" evidence="1"/>
<dbReference type="EMBL" id="AJ749949">
    <property type="protein sequence ID" value="CAG45545.1"/>
    <property type="molecule type" value="Genomic_DNA"/>
</dbReference>
<dbReference type="RefSeq" id="WP_003017870.1">
    <property type="nucleotide sequence ID" value="NZ_CP010290.1"/>
</dbReference>
<dbReference type="RefSeq" id="YP_169909.1">
    <property type="nucleotide sequence ID" value="NC_006570.2"/>
</dbReference>
<dbReference type="SMR" id="Q5NGD3"/>
<dbReference type="STRING" id="177416.FTT_0912c"/>
<dbReference type="DNASU" id="3191489"/>
<dbReference type="EnsemblBacteria" id="CAG45545">
    <property type="protein sequence ID" value="CAG45545"/>
    <property type="gene ID" value="FTT_0912c"/>
</dbReference>
<dbReference type="KEGG" id="ftu:FTT_0912c"/>
<dbReference type="eggNOG" id="COG0293">
    <property type="taxonomic scope" value="Bacteria"/>
</dbReference>
<dbReference type="OrthoDB" id="9790080at2"/>
<dbReference type="Proteomes" id="UP000001174">
    <property type="component" value="Chromosome"/>
</dbReference>
<dbReference type="GO" id="GO:0005737">
    <property type="term" value="C:cytoplasm"/>
    <property type="evidence" value="ECO:0007669"/>
    <property type="project" value="UniProtKB-SubCell"/>
</dbReference>
<dbReference type="GO" id="GO:0008650">
    <property type="term" value="F:rRNA (uridine-2'-O-)-methyltransferase activity"/>
    <property type="evidence" value="ECO:0007669"/>
    <property type="project" value="UniProtKB-UniRule"/>
</dbReference>
<dbReference type="FunFam" id="3.40.50.150:FF:000005">
    <property type="entry name" value="Ribosomal RNA large subunit methyltransferase E"/>
    <property type="match status" value="1"/>
</dbReference>
<dbReference type="Gene3D" id="3.40.50.150">
    <property type="entry name" value="Vaccinia Virus protein VP39"/>
    <property type="match status" value="1"/>
</dbReference>
<dbReference type="HAMAP" id="MF_01547">
    <property type="entry name" value="RNA_methyltr_E"/>
    <property type="match status" value="1"/>
</dbReference>
<dbReference type="InterPro" id="IPR050082">
    <property type="entry name" value="RNA_methyltr_RlmE"/>
</dbReference>
<dbReference type="InterPro" id="IPR002877">
    <property type="entry name" value="RNA_MeTrfase_FtsJ_dom"/>
</dbReference>
<dbReference type="InterPro" id="IPR015507">
    <property type="entry name" value="rRNA-MeTfrase_E"/>
</dbReference>
<dbReference type="InterPro" id="IPR029063">
    <property type="entry name" value="SAM-dependent_MTases_sf"/>
</dbReference>
<dbReference type="NCBIfam" id="NF008390">
    <property type="entry name" value="PRK11188.1"/>
    <property type="match status" value="1"/>
</dbReference>
<dbReference type="PANTHER" id="PTHR10920">
    <property type="entry name" value="RIBOSOMAL RNA METHYLTRANSFERASE"/>
    <property type="match status" value="1"/>
</dbReference>
<dbReference type="PANTHER" id="PTHR10920:SF18">
    <property type="entry name" value="RRNA METHYLTRANSFERASE 2, MITOCHONDRIAL"/>
    <property type="match status" value="1"/>
</dbReference>
<dbReference type="Pfam" id="PF01728">
    <property type="entry name" value="FtsJ"/>
    <property type="match status" value="1"/>
</dbReference>
<dbReference type="PIRSF" id="PIRSF005461">
    <property type="entry name" value="23S_rRNA_mtase"/>
    <property type="match status" value="1"/>
</dbReference>
<dbReference type="SUPFAM" id="SSF53335">
    <property type="entry name" value="S-adenosyl-L-methionine-dependent methyltransferases"/>
    <property type="match status" value="1"/>
</dbReference>
<proteinExistence type="inferred from homology"/>
<feature type="chain" id="PRO_0000155500" description="Ribosomal RNA large subunit methyltransferase E">
    <location>
        <begin position="1"/>
        <end position="206"/>
    </location>
</feature>
<feature type="active site" description="Proton acceptor" evidence="1">
    <location>
        <position position="161"/>
    </location>
</feature>
<feature type="binding site" evidence="1">
    <location>
        <position position="60"/>
    </location>
    <ligand>
        <name>S-adenosyl-L-methionine</name>
        <dbReference type="ChEBI" id="CHEBI:59789"/>
    </ligand>
</feature>
<feature type="binding site" evidence="1">
    <location>
        <position position="62"/>
    </location>
    <ligand>
        <name>S-adenosyl-L-methionine</name>
        <dbReference type="ChEBI" id="CHEBI:59789"/>
    </ligand>
</feature>
<feature type="binding site" evidence="1">
    <location>
        <position position="80"/>
    </location>
    <ligand>
        <name>S-adenosyl-L-methionine</name>
        <dbReference type="ChEBI" id="CHEBI:59789"/>
    </ligand>
</feature>
<feature type="binding site" evidence="1">
    <location>
        <position position="96"/>
    </location>
    <ligand>
        <name>S-adenosyl-L-methionine</name>
        <dbReference type="ChEBI" id="CHEBI:59789"/>
    </ligand>
</feature>
<feature type="binding site" evidence="1">
    <location>
        <position position="121"/>
    </location>
    <ligand>
        <name>S-adenosyl-L-methionine</name>
        <dbReference type="ChEBI" id="CHEBI:59789"/>
    </ligand>
</feature>